<keyword id="KW-1185">Reference proteome</keyword>
<keyword id="KW-0687">Ribonucleoprotein</keyword>
<keyword id="KW-0689">Ribosomal protein</keyword>
<keyword id="KW-0694">RNA-binding</keyword>
<keyword id="KW-0699">rRNA-binding</keyword>
<gene>
    <name evidence="1" type="primary">rpsK</name>
    <name type="ordered locus">Noca_3877</name>
</gene>
<protein>
    <recommendedName>
        <fullName evidence="1">Small ribosomal subunit protein uS11</fullName>
    </recommendedName>
    <alternativeName>
        <fullName evidence="3">30S ribosomal protein S11</fullName>
    </alternativeName>
</protein>
<name>RS11_NOCSJ</name>
<dbReference type="EMBL" id="CP000509">
    <property type="protein sequence ID" value="ABL83375.1"/>
    <property type="molecule type" value="Genomic_DNA"/>
</dbReference>
<dbReference type="RefSeq" id="WP_011757306.1">
    <property type="nucleotide sequence ID" value="NC_008699.1"/>
</dbReference>
<dbReference type="SMR" id="A1SNJ0"/>
<dbReference type="STRING" id="196162.Noca_3877"/>
<dbReference type="KEGG" id="nca:Noca_3877"/>
<dbReference type="eggNOG" id="COG0100">
    <property type="taxonomic scope" value="Bacteria"/>
</dbReference>
<dbReference type="HOGENOM" id="CLU_072439_5_0_11"/>
<dbReference type="OrthoDB" id="9806415at2"/>
<dbReference type="Proteomes" id="UP000000640">
    <property type="component" value="Chromosome"/>
</dbReference>
<dbReference type="GO" id="GO:1990904">
    <property type="term" value="C:ribonucleoprotein complex"/>
    <property type="evidence" value="ECO:0007669"/>
    <property type="project" value="UniProtKB-KW"/>
</dbReference>
<dbReference type="GO" id="GO:0005840">
    <property type="term" value="C:ribosome"/>
    <property type="evidence" value="ECO:0007669"/>
    <property type="project" value="UniProtKB-KW"/>
</dbReference>
<dbReference type="GO" id="GO:0019843">
    <property type="term" value="F:rRNA binding"/>
    <property type="evidence" value="ECO:0007669"/>
    <property type="project" value="UniProtKB-UniRule"/>
</dbReference>
<dbReference type="GO" id="GO:0003735">
    <property type="term" value="F:structural constituent of ribosome"/>
    <property type="evidence" value="ECO:0007669"/>
    <property type="project" value="InterPro"/>
</dbReference>
<dbReference type="GO" id="GO:0006412">
    <property type="term" value="P:translation"/>
    <property type="evidence" value="ECO:0007669"/>
    <property type="project" value="UniProtKB-UniRule"/>
</dbReference>
<dbReference type="FunFam" id="3.30.420.80:FF:000001">
    <property type="entry name" value="30S ribosomal protein S11"/>
    <property type="match status" value="1"/>
</dbReference>
<dbReference type="Gene3D" id="3.30.420.80">
    <property type="entry name" value="Ribosomal protein S11"/>
    <property type="match status" value="1"/>
</dbReference>
<dbReference type="HAMAP" id="MF_01310">
    <property type="entry name" value="Ribosomal_uS11"/>
    <property type="match status" value="1"/>
</dbReference>
<dbReference type="InterPro" id="IPR001971">
    <property type="entry name" value="Ribosomal_uS11"/>
</dbReference>
<dbReference type="InterPro" id="IPR019981">
    <property type="entry name" value="Ribosomal_uS11_bac-type"/>
</dbReference>
<dbReference type="InterPro" id="IPR018102">
    <property type="entry name" value="Ribosomal_uS11_CS"/>
</dbReference>
<dbReference type="InterPro" id="IPR036967">
    <property type="entry name" value="Ribosomal_uS11_sf"/>
</dbReference>
<dbReference type="NCBIfam" id="NF003698">
    <property type="entry name" value="PRK05309.1"/>
    <property type="match status" value="1"/>
</dbReference>
<dbReference type="NCBIfam" id="TIGR03632">
    <property type="entry name" value="uS11_bact"/>
    <property type="match status" value="1"/>
</dbReference>
<dbReference type="PANTHER" id="PTHR11759">
    <property type="entry name" value="40S RIBOSOMAL PROTEIN S14/30S RIBOSOMAL PROTEIN S11"/>
    <property type="match status" value="1"/>
</dbReference>
<dbReference type="Pfam" id="PF00411">
    <property type="entry name" value="Ribosomal_S11"/>
    <property type="match status" value="1"/>
</dbReference>
<dbReference type="PIRSF" id="PIRSF002131">
    <property type="entry name" value="Ribosomal_S11"/>
    <property type="match status" value="1"/>
</dbReference>
<dbReference type="SUPFAM" id="SSF53137">
    <property type="entry name" value="Translational machinery components"/>
    <property type="match status" value="1"/>
</dbReference>
<dbReference type="PROSITE" id="PS00054">
    <property type="entry name" value="RIBOSOMAL_S11"/>
    <property type="match status" value="1"/>
</dbReference>
<accession>A1SNJ0</accession>
<reference key="1">
    <citation type="submission" date="2006-12" db="EMBL/GenBank/DDBJ databases">
        <title>Complete sequence of chromosome 1 of Nocardioides sp. JS614.</title>
        <authorList>
            <person name="Copeland A."/>
            <person name="Lucas S."/>
            <person name="Lapidus A."/>
            <person name="Barry K."/>
            <person name="Detter J.C."/>
            <person name="Glavina del Rio T."/>
            <person name="Hammon N."/>
            <person name="Israni S."/>
            <person name="Dalin E."/>
            <person name="Tice H."/>
            <person name="Pitluck S."/>
            <person name="Thompson L.S."/>
            <person name="Brettin T."/>
            <person name="Bruce D."/>
            <person name="Han C."/>
            <person name="Tapia R."/>
            <person name="Schmutz J."/>
            <person name="Larimer F."/>
            <person name="Land M."/>
            <person name="Hauser L."/>
            <person name="Kyrpides N."/>
            <person name="Kim E."/>
            <person name="Mattes T."/>
            <person name="Gossett J."/>
            <person name="Richardson P."/>
        </authorList>
    </citation>
    <scope>NUCLEOTIDE SEQUENCE [LARGE SCALE GENOMIC DNA]</scope>
    <source>
        <strain>ATCC BAA-499 / JS614</strain>
    </source>
</reference>
<comment type="function">
    <text evidence="1">Located on the platform of the 30S subunit, it bridges several disparate RNA helices of the 16S rRNA. Forms part of the Shine-Dalgarno cleft in the 70S ribosome.</text>
</comment>
<comment type="subunit">
    <text evidence="1">Part of the 30S ribosomal subunit. Interacts with proteins S7 and S18. Binds to IF-3.</text>
</comment>
<comment type="similarity">
    <text evidence="1">Belongs to the universal ribosomal protein uS11 family.</text>
</comment>
<organism>
    <name type="scientific">Nocardioides sp. (strain ATCC BAA-499 / JS614)</name>
    <dbReference type="NCBI Taxonomy" id="196162"/>
    <lineage>
        <taxon>Bacteria</taxon>
        <taxon>Bacillati</taxon>
        <taxon>Actinomycetota</taxon>
        <taxon>Actinomycetes</taxon>
        <taxon>Propionibacteriales</taxon>
        <taxon>Nocardioidaceae</taxon>
        <taxon>Nocardioides</taxon>
    </lineage>
</organism>
<feature type="chain" id="PRO_0000294812" description="Small ribosomal subunit protein uS11">
    <location>
        <begin position="1"/>
        <end position="135"/>
    </location>
</feature>
<feature type="region of interest" description="Disordered" evidence="2">
    <location>
        <begin position="1"/>
        <end position="22"/>
    </location>
</feature>
<evidence type="ECO:0000255" key="1">
    <source>
        <dbReference type="HAMAP-Rule" id="MF_01310"/>
    </source>
</evidence>
<evidence type="ECO:0000256" key="2">
    <source>
        <dbReference type="SAM" id="MobiDB-lite"/>
    </source>
</evidence>
<evidence type="ECO:0000305" key="3"/>
<sequence length="135" mass="14308">MPPKSRTAAGAKKVRRKEKKNVAMGEAHIKSTFNNTIVTITDPTGAVISWASAGTVGFKGSRKSTPFAAQMAAEAAGRRAMEHGMKKIDVFVKGPGSGRETAIRSLGAIGLEVGTIQDVTPTPHNGCRPPKRRRV</sequence>
<proteinExistence type="inferred from homology"/>